<gene>
    <name evidence="1" type="primary">trmD</name>
    <name type="ordered locus">M6_Spy0675</name>
</gene>
<accession>Q5XCQ3</accession>
<keyword id="KW-0963">Cytoplasm</keyword>
<keyword id="KW-0489">Methyltransferase</keyword>
<keyword id="KW-0949">S-adenosyl-L-methionine</keyword>
<keyword id="KW-0808">Transferase</keyword>
<keyword id="KW-0819">tRNA processing</keyword>
<sequence>MKIDILTLFPEMFAPLEHSIVGKAKEKGLLDIHYHNFRDYAEKARHVDDEPYGGGQGMLLRAQPIFDTIEQIEAKKPRIILLDPAGKPFTQAYAEELALEEELIFICGHYEGYDERIKTLVTDEISLGDFVLTGGELAAMTIVDATVRLIPQVLGKESSHQDDSFSSGLLEYPQYTRPYDYRGMTVPDVLMSGHHERIRLWRLEESLRKTYLRRPDLLERYDFSEEERKLLDKIKEALG</sequence>
<dbReference type="EC" id="2.1.1.228" evidence="1"/>
<dbReference type="EMBL" id="CP000003">
    <property type="protein sequence ID" value="AAT86810.1"/>
    <property type="molecule type" value="Genomic_DNA"/>
</dbReference>
<dbReference type="RefSeq" id="WP_002990222.1">
    <property type="nucleotide sequence ID" value="NC_006086.1"/>
</dbReference>
<dbReference type="SMR" id="Q5XCQ3"/>
<dbReference type="KEGG" id="spa:M6_Spy0675"/>
<dbReference type="HOGENOM" id="CLU_047363_0_1_9"/>
<dbReference type="Proteomes" id="UP000001167">
    <property type="component" value="Chromosome"/>
</dbReference>
<dbReference type="GO" id="GO:0005829">
    <property type="term" value="C:cytosol"/>
    <property type="evidence" value="ECO:0007669"/>
    <property type="project" value="TreeGrafter"/>
</dbReference>
<dbReference type="GO" id="GO:0052906">
    <property type="term" value="F:tRNA (guanine(37)-N1)-methyltransferase activity"/>
    <property type="evidence" value="ECO:0007669"/>
    <property type="project" value="UniProtKB-UniRule"/>
</dbReference>
<dbReference type="GO" id="GO:0002939">
    <property type="term" value="P:tRNA N1-guanine methylation"/>
    <property type="evidence" value="ECO:0007669"/>
    <property type="project" value="TreeGrafter"/>
</dbReference>
<dbReference type="CDD" id="cd18080">
    <property type="entry name" value="TrmD-like"/>
    <property type="match status" value="1"/>
</dbReference>
<dbReference type="FunFam" id="1.10.1270.20:FF:000001">
    <property type="entry name" value="tRNA (guanine-N(1)-)-methyltransferase"/>
    <property type="match status" value="1"/>
</dbReference>
<dbReference type="FunFam" id="3.40.1280.10:FF:000001">
    <property type="entry name" value="tRNA (guanine-N(1)-)-methyltransferase"/>
    <property type="match status" value="1"/>
</dbReference>
<dbReference type="Gene3D" id="3.40.1280.10">
    <property type="match status" value="1"/>
</dbReference>
<dbReference type="Gene3D" id="1.10.1270.20">
    <property type="entry name" value="tRNA(m1g37)methyltransferase, domain 2"/>
    <property type="match status" value="1"/>
</dbReference>
<dbReference type="HAMAP" id="MF_00605">
    <property type="entry name" value="TrmD"/>
    <property type="match status" value="1"/>
</dbReference>
<dbReference type="InterPro" id="IPR029028">
    <property type="entry name" value="Alpha/beta_knot_MTases"/>
</dbReference>
<dbReference type="InterPro" id="IPR023148">
    <property type="entry name" value="tRNA_m1G_MeTrfase_C_sf"/>
</dbReference>
<dbReference type="InterPro" id="IPR002649">
    <property type="entry name" value="tRNA_m1G_MeTrfase_TrmD"/>
</dbReference>
<dbReference type="InterPro" id="IPR029026">
    <property type="entry name" value="tRNA_m1G_MTases_N"/>
</dbReference>
<dbReference type="InterPro" id="IPR016009">
    <property type="entry name" value="tRNA_MeTrfase_TRMD/TRM10"/>
</dbReference>
<dbReference type="NCBIfam" id="NF000648">
    <property type="entry name" value="PRK00026.1"/>
    <property type="match status" value="1"/>
</dbReference>
<dbReference type="NCBIfam" id="TIGR00088">
    <property type="entry name" value="trmD"/>
    <property type="match status" value="1"/>
</dbReference>
<dbReference type="PANTHER" id="PTHR46417">
    <property type="entry name" value="TRNA (GUANINE-N(1)-)-METHYLTRANSFERASE"/>
    <property type="match status" value="1"/>
</dbReference>
<dbReference type="PANTHER" id="PTHR46417:SF1">
    <property type="entry name" value="TRNA (GUANINE-N(1)-)-METHYLTRANSFERASE"/>
    <property type="match status" value="1"/>
</dbReference>
<dbReference type="Pfam" id="PF01746">
    <property type="entry name" value="tRNA_m1G_MT"/>
    <property type="match status" value="1"/>
</dbReference>
<dbReference type="PIRSF" id="PIRSF000386">
    <property type="entry name" value="tRNA_mtase"/>
    <property type="match status" value="1"/>
</dbReference>
<dbReference type="SUPFAM" id="SSF75217">
    <property type="entry name" value="alpha/beta knot"/>
    <property type="match status" value="1"/>
</dbReference>
<proteinExistence type="inferred from homology"/>
<name>TRMD_STRP6</name>
<organism>
    <name type="scientific">Streptococcus pyogenes serotype M6 (strain ATCC BAA-946 / MGAS10394)</name>
    <dbReference type="NCBI Taxonomy" id="286636"/>
    <lineage>
        <taxon>Bacteria</taxon>
        <taxon>Bacillati</taxon>
        <taxon>Bacillota</taxon>
        <taxon>Bacilli</taxon>
        <taxon>Lactobacillales</taxon>
        <taxon>Streptococcaceae</taxon>
        <taxon>Streptococcus</taxon>
    </lineage>
</organism>
<comment type="function">
    <text evidence="1">Specifically methylates guanosine-37 in various tRNAs.</text>
</comment>
<comment type="catalytic activity">
    <reaction evidence="1">
        <text>guanosine(37) in tRNA + S-adenosyl-L-methionine = N(1)-methylguanosine(37) in tRNA + S-adenosyl-L-homocysteine + H(+)</text>
        <dbReference type="Rhea" id="RHEA:36899"/>
        <dbReference type="Rhea" id="RHEA-COMP:10145"/>
        <dbReference type="Rhea" id="RHEA-COMP:10147"/>
        <dbReference type="ChEBI" id="CHEBI:15378"/>
        <dbReference type="ChEBI" id="CHEBI:57856"/>
        <dbReference type="ChEBI" id="CHEBI:59789"/>
        <dbReference type="ChEBI" id="CHEBI:73542"/>
        <dbReference type="ChEBI" id="CHEBI:74269"/>
        <dbReference type="EC" id="2.1.1.228"/>
    </reaction>
</comment>
<comment type="subunit">
    <text evidence="1">Homodimer.</text>
</comment>
<comment type="subcellular location">
    <subcellularLocation>
        <location evidence="1">Cytoplasm</location>
    </subcellularLocation>
</comment>
<comment type="similarity">
    <text evidence="1">Belongs to the RNA methyltransferase TrmD family.</text>
</comment>
<evidence type="ECO:0000255" key="1">
    <source>
        <dbReference type="HAMAP-Rule" id="MF_00605"/>
    </source>
</evidence>
<feature type="chain" id="PRO_0000060473" description="tRNA (guanine-N(1)-)-methyltransferase">
    <location>
        <begin position="1"/>
        <end position="239"/>
    </location>
</feature>
<feature type="binding site" evidence="1">
    <location>
        <position position="108"/>
    </location>
    <ligand>
        <name>S-adenosyl-L-methionine</name>
        <dbReference type="ChEBI" id="CHEBI:59789"/>
    </ligand>
</feature>
<feature type="binding site" evidence="1">
    <location>
        <begin position="127"/>
        <end position="132"/>
    </location>
    <ligand>
        <name>S-adenosyl-L-methionine</name>
        <dbReference type="ChEBI" id="CHEBI:59789"/>
    </ligand>
</feature>
<protein>
    <recommendedName>
        <fullName evidence="1">tRNA (guanine-N(1)-)-methyltransferase</fullName>
        <ecNumber evidence="1">2.1.1.228</ecNumber>
    </recommendedName>
    <alternativeName>
        <fullName evidence="1">M1G-methyltransferase</fullName>
    </alternativeName>
    <alternativeName>
        <fullName evidence="1">tRNA [GM37] methyltransferase</fullName>
    </alternativeName>
</protein>
<reference key="1">
    <citation type="journal article" date="2004" name="J. Infect. Dis.">
        <title>Progress toward characterization of the group A Streptococcus metagenome: complete genome sequence of a macrolide-resistant serotype M6 strain.</title>
        <authorList>
            <person name="Banks D.J."/>
            <person name="Porcella S.F."/>
            <person name="Barbian K.D."/>
            <person name="Beres S.B."/>
            <person name="Philips L.E."/>
            <person name="Voyich J.M."/>
            <person name="DeLeo F.R."/>
            <person name="Martin J.M."/>
            <person name="Somerville G.A."/>
            <person name="Musser J.M."/>
        </authorList>
    </citation>
    <scope>NUCLEOTIDE SEQUENCE [LARGE SCALE GENOMIC DNA]</scope>
    <source>
        <strain>ATCC BAA-946 / MGAS10394</strain>
    </source>
</reference>